<keyword id="KW-0002">3D-structure</keyword>
<keyword id="KW-0007">Acetylation</keyword>
<keyword id="KW-0025">Alternative splicing</keyword>
<keyword id="KW-0963">Cytoplasm</keyword>
<keyword id="KW-0225">Disease variant</keyword>
<keyword id="KW-1023">Dystonia</keyword>
<keyword id="KW-0275">Fatty acid biosynthesis</keyword>
<keyword id="KW-0276">Fatty acid metabolism</keyword>
<keyword id="KW-0444">Lipid biosynthesis</keyword>
<keyword id="KW-0443">Lipid metabolism</keyword>
<keyword id="KW-0496">Mitochondrion</keyword>
<keyword id="KW-0521">NADP</keyword>
<keyword id="KW-0539">Nucleus</keyword>
<keyword id="KW-0560">Oxidoreductase</keyword>
<keyword id="KW-1267">Proteomics identification</keyword>
<keyword id="KW-1185">Reference proteome</keyword>
<keyword id="KW-0809">Transit peptide</keyword>
<proteinExistence type="evidence at protein level"/>
<accession>Q9BV79</accession>
<accession>B3KT72</accession>
<accession>Q5SYU0</accession>
<accession>Q5SYU1</accession>
<accession>Q5SYU2</accession>
<accession>Q6IBU9</accession>
<accession>Q9Y373</accession>
<evidence type="ECO:0000250" key="1">
    <source>
        <dbReference type="UniProtKB" id="Q8WZM3"/>
    </source>
</evidence>
<evidence type="ECO:0000250" key="2">
    <source>
        <dbReference type="UniProtKB" id="Q9DCS3"/>
    </source>
</evidence>
<evidence type="ECO:0000250" key="3">
    <source>
        <dbReference type="UniProtKB" id="Q9V6U9"/>
    </source>
</evidence>
<evidence type="ECO:0000250" key="4">
    <source>
        <dbReference type="UniProtKB" id="Q9Z311"/>
    </source>
</evidence>
<evidence type="ECO:0000255" key="5"/>
<evidence type="ECO:0000269" key="6">
    <source>
    </source>
</evidence>
<evidence type="ECO:0000269" key="7">
    <source>
    </source>
</evidence>
<evidence type="ECO:0000269" key="8">
    <source>
    </source>
</evidence>
<evidence type="ECO:0000269" key="9">
    <source>
    </source>
</evidence>
<evidence type="ECO:0000269" key="10">
    <source>
    </source>
</evidence>
<evidence type="ECO:0000269" key="11">
    <source>
    </source>
</evidence>
<evidence type="ECO:0000269" key="12">
    <source>
    </source>
</evidence>
<evidence type="ECO:0000269" key="13">
    <source>
    </source>
</evidence>
<evidence type="ECO:0000269" key="14">
    <source>
    </source>
</evidence>
<evidence type="ECO:0000269" key="15">
    <source ref="3"/>
</evidence>
<evidence type="ECO:0000269" key="16">
    <source ref="5"/>
</evidence>
<evidence type="ECO:0000303" key="17">
    <source>
    </source>
</evidence>
<evidence type="ECO:0000303" key="18">
    <source>
    </source>
</evidence>
<evidence type="ECO:0000303" key="19">
    <source>
    </source>
</evidence>
<evidence type="ECO:0000305" key="20"/>
<evidence type="ECO:0000305" key="21">
    <source>
    </source>
</evidence>
<evidence type="ECO:0000305" key="22">
    <source>
    </source>
</evidence>
<evidence type="ECO:0007829" key="23">
    <source>
        <dbReference type="PDB" id="1ZSY"/>
    </source>
</evidence>
<evidence type="ECO:0007829" key="24">
    <source>
        <dbReference type="PDB" id="2VCY"/>
    </source>
</evidence>
<name>MECR_HUMAN</name>
<comment type="function">
    <text evidence="2 3 7 10 12 13">Catalyzes the NADPH-dependent reduction of trans-2-enoyl thioesters in mitochondrial fatty acid synthesis (fatty acid synthesis type II). Fatty acid chain elongation in mitochondria uses acyl carrier protein (ACP) as an acyl group carrier, but the enzyme accepts both ACP and CoA thioesters as substrates in vitro. Displays a preference for medium-chain over short- and long-chain substrates (PubMed:12654921, PubMed:18479707, PubMed:27817865). May provide the octanoyl chain used for lipoic acid biosynthesis, regulating protein lipoylation and mitochondrial respiratory activity particularly in Purkinje cells (By similarity). Involved in iron homeostasis; affecting Fe-S cluster assembly and ceramide metabolism (PubMed:37653044). Required for proper morphology and bioenergetic functions of mitochondria (PubMed:37653044). Required for maintenance of neurons (By similarity).</text>
</comment>
<comment type="catalytic activity">
    <reaction evidence="21 22">
        <text>a 2,3-saturated acyl-[ACP] + NADP(+) = a (2E)-enoyl-[ACP] + NADPH + H(+)</text>
        <dbReference type="Rhea" id="RHEA:22564"/>
        <dbReference type="Rhea" id="RHEA-COMP:9925"/>
        <dbReference type="Rhea" id="RHEA-COMP:9926"/>
        <dbReference type="ChEBI" id="CHEBI:15378"/>
        <dbReference type="ChEBI" id="CHEBI:57783"/>
        <dbReference type="ChEBI" id="CHEBI:58349"/>
        <dbReference type="ChEBI" id="CHEBI:78784"/>
        <dbReference type="ChEBI" id="CHEBI:78785"/>
        <dbReference type="EC" id="1.3.1.104"/>
    </reaction>
    <physiologicalReaction direction="right-to-left" evidence="21 22">
        <dbReference type="Rhea" id="RHEA:22566"/>
    </physiologicalReaction>
</comment>
<comment type="catalytic activity">
    <reaction evidence="22">
        <text>(2E)-butenoyl-[ACP] + NADPH + H(+) = butanoyl-[ACP] + NADP(+)</text>
        <dbReference type="Rhea" id="RHEA:41812"/>
        <dbReference type="Rhea" id="RHEA-COMP:9627"/>
        <dbReference type="Rhea" id="RHEA-COMP:9628"/>
        <dbReference type="ChEBI" id="CHEBI:15378"/>
        <dbReference type="ChEBI" id="CHEBI:57783"/>
        <dbReference type="ChEBI" id="CHEBI:58349"/>
        <dbReference type="ChEBI" id="CHEBI:78453"/>
        <dbReference type="ChEBI" id="CHEBI:78454"/>
    </reaction>
    <physiologicalReaction direction="left-to-right" evidence="22">
        <dbReference type="Rhea" id="RHEA:41813"/>
    </physiologicalReaction>
</comment>
<comment type="catalytic activity">
    <reaction evidence="22">
        <text>(2E)-hexenoyl-[ACP] + NADPH + H(+) = hexanoyl-[ACP] + NADP(+)</text>
        <dbReference type="Rhea" id="RHEA:41832"/>
        <dbReference type="Rhea" id="RHEA-COMP:9631"/>
        <dbReference type="Rhea" id="RHEA-COMP:9632"/>
        <dbReference type="ChEBI" id="CHEBI:15378"/>
        <dbReference type="ChEBI" id="CHEBI:57783"/>
        <dbReference type="ChEBI" id="CHEBI:58349"/>
        <dbReference type="ChEBI" id="CHEBI:78458"/>
        <dbReference type="ChEBI" id="CHEBI:78459"/>
    </reaction>
    <physiologicalReaction direction="left-to-right" evidence="22">
        <dbReference type="Rhea" id="RHEA:41833"/>
    </physiologicalReaction>
</comment>
<comment type="catalytic activity">
    <reaction evidence="22">
        <text>(2E)-octenoyl-[ACP] + NADPH + H(+) = octanoyl-[ACP] + NADP(+)</text>
        <dbReference type="Rhea" id="RHEA:41848"/>
        <dbReference type="Rhea" id="RHEA-COMP:9635"/>
        <dbReference type="Rhea" id="RHEA-COMP:9636"/>
        <dbReference type="ChEBI" id="CHEBI:15378"/>
        <dbReference type="ChEBI" id="CHEBI:57783"/>
        <dbReference type="ChEBI" id="CHEBI:58349"/>
        <dbReference type="ChEBI" id="CHEBI:78462"/>
        <dbReference type="ChEBI" id="CHEBI:78463"/>
    </reaction>
    <physiologicalReaction direction="left-to-right" evidence="22">
        <dbReference type="Rhea" id="RHEA:41849"/>
    </physiologicalReaction>
</comment>
<comment type="catalytic activity">
    <reaction evidence="21 22">
        <text>(2E)-decenoyl-[ACP] + NADPH + H(+) = decanoyl-[ACP] + NADP(+)</text>
        <dbReference type="Rhea" id="RHEA:41864"/>
        <dbReference type="Rhea" id="RHEA-COMP:9639"/>
        <dbReference type="Rhea" id="RHEA-COMP:9640"/>
        <dbReference type="ChEBI" id="CHEBI:15378"/>
        <dbReference type="ChEBI" id="CHEBI:57783"/>
        <dbReference type="ChEBI" id="CHEBI:58349"/>
        <dbReference type="ChEBI" id="CHEBI:78467"/>
        <dbReference type="ChEBI" id="CHEBI:78468"/>
    </reaction>
    <physiologicalReaction direction="left-to-right" evidence="22">
        <dbReference type="Rhea" id="RHEA:41865"/>
    </physiologicalReaction>
</comment>
<comment type="catalytic activity">
    <reaction evidence="22">
        <text>(2E)-dodecenoyl-[ACP] + NADPH + H(+) = dodecanoyl-[ACP] + NADP(+)</text>
        <dbReference type="Rhea" id="RHEA:41880"/>
        <dbReference type="Rhea" id="RHEA-COMP:9643"/>
        <dbReference type="Rhea" id="RHEA-COMP:9644"/>
        <dbReference type="ChEBI" id="CHEBI:15378"/>
        <dbReference type="ChEBI" id="CHEBI:57783"/>
        <dbReference type="ChEBI" id="CHEBI:58349"/>
        <dbReference type="ChEBI" id="CHEBI:65264"/>
        <dbReference type="ChEBI" id="CHEBI:78472"/>
    </reaction>
    <physiologicalReaction direction="left-to-right" evidence="22">
        <dbReference type="Rhea" id="RHEA:41881"/>
    </physiologicalReaction>
</comment>
<comment type="catalytic activity">
    <reaction evidence="22">
        <text>(2E)-tetradecenoyl-[ACP] + NADPH + H(+) = tetradecanoyl-[ACP] + NADP(+)</text>
        <dbReference type="Rhea" id="RHEA:41896"/>
        <dbReference type="Rhea" id="RHEA-COMP:9647"/>
        <dbReference type="Rhea" id="RHEA-COMP:9648"/>
        <dbReference type="ChEBI" id="CHEBI:15378"/>
        <dbReference type="ChEBI" id="CHEBI:57783"/>
        <dbReference type="ChEBI" id="CHEBI:58349"/>
        <dbReference type="ChEBI" id="CHEBI:78475"/>
        <dbReference type="ChEBI" id="CHEBI:78477"/>
    </reaction>
    <physiologicalReaction direction="left-to-right" evidence="22">
        <dbReference type="Rhea" id="RHEA:41897"/>
    </physiologicalReaction>
</comment>
<comment type="catalytic activity">
    <reaction evidence="22">
        <text>(2E)-hexadecenoyl-[ACP] + NADPH + H(+) = hexadecanoyl-[ACP] + NADP(+)</text>
        <dbReference type="Rhea" id="RHEA:41912"/>
        <dbReference type="Rhea" id="RHEA-COMP:9651"/>
        <dbReference type="Rhea" id="RHEA-COMP:9652"/>
        <dbReference type="ChEBI" id="CHEBI:15378"/>
        <dbReference type="ChEBI" id="CHEBI:57783"/>
        <dbReference type="ChEBI" id="CHEBI:58349"/>
        <dbReference type="ChEBI" id="CHEBI:78481"/>
        <dbReference type="ChEBI" id="CHEBI:78483"/>
    </reaction>
    <physiologicalReaction direction="left-to-right" evidence="22">
        <dbReference type="Rhea" id="RHEA:41913"/>
    </physiologicalReaction>
</comment>
<comment type="biophysicochemical properties">
    <kinetics>
        <KM evidence="10">74.2 uM for (2E)-butenoyl-CoA</KM>
        <KM evidence="10">63.5 uM for (2E)-hexenoyl-CoA</KM>
        <KM evidence="10">10.2 uM for (2E)-octenoyl-CoA</KM>
        <KM evidence="10">10.4 uM for (2E)-decenoyl-CoA</KM>
        <KM evidence="10">3.6 uM for (2E)-dodecenoyl-CoA</KM>
        <KM evidence="10">4.3 uM for (2E)-tetradecenoyl-CoA</KM>
        <KM evidence="10">6.6 uM for (2E)-hexadecenoyl-CoA</KM>
        <KM evidence="7">37 uM for (2E)-hexenoyl-CoA</KM>
        <KM evidence="7">7.1 uM for (2E)-decenoyl-CoA</KM>
    </kinetics>
</comment>
<comment type="subunit">
    <text evidence="4 7 10">Homodimer (PubMed:12654921, PubMed:18479707). Isoform 2 interacts with PPARA in the nucleus and increases its activity (By similarity).</text>
</comment>
<comment type="subcellular location">
    <molecule>Isoform 1</molecule>
    <subcellularLocation>
        <location evidence="7 13">Mitochondrion</location>
    </subcellularLocation>
</comment>
<comment type="subcellular location">
    <molecule>Isoform 2</molecule>
    <subcellularLocation>
        <location evidence="11">Cytoplasm</location>
    </subcellularLocation>
    <subcellularLocation>
        <location evidence="11">Nucleus</location>
    </subcellularLocation>
</comment>
<comment type="alternative products">
    <event type="alternative splicing"/>
    <isoform>
        <id>Q9BV79-1</id>
        <name>1</name>
        <sequence type="displayed"/>
    </isoform>
    <isoform>
        <id>Q9BV79-2</id>
        <name>2</name>
        <name>cMECR</name>
        <sequence type="described" ref="VSP_041131"/>
    </isoform>
</comment>
<comment type="tissue specificity">
    <text evidence="7">Highly expressed in skeletal and heart muscle. Expressed at lower level in placenta, liver, kidney and pancreas. Weakly or not expressed in lung.</text>
</comment>
<comment type="disease" evidence="12">
    <disease id="DI-04936">
        <name>Dystonia, childhood-onset, with optic atrophy and basal ganglia abnormalities</name>
        <acronym>DYTOABG</acronym>
        <description>An autosomal recessive neurologic disorder characterized by childhood-onset dystonia, basal ganglia degeneration and optic atrophy with decreased visual acuity. Dystonia is defined by the presence of sustained involuntary muscle contraction, often leading to abnormal postures. DYTOABG severity is variable, and some patients lose independent ambulation.</description>
        <dbReference type="MIM" id="617282"/>
    </disease>
    <text>The disease is caused by variants affecting the gene represented in this entry.</text>
</comment>
<comment type="disease" evidence="14">
    <disease id="DI-06791">
        <name>Optic atrophy 16</name>
        <acronym>OPA16</acronym>
        <description>A disease characterized by visual impairment in association with optic atrophy. Atrophy of the optic disk indicates a deficiency in the number of nerve fibers which arise in the retina and converge to form the optic disk, optic nerve, optic chiasm and optic tracts. OPA16 is an autosomal recessive form. Patients also show mild sensorineural hearing impairment.</description>
        <dbReference type="MIM" id="620629"/>
    </disease>
    <text>The disease may be caused by variants affecting the gene represented in this entry.</text>
</comment>
<comment type="similarity">
    <text evidence="20">Belongs to the zinc-containing alcohol dehydrogenase family. Quinone oxidoreductase subfamily.</text>
</comment>
<comment type="sequence caution" evidence="20">
    <conflict type="frameshift">
        <sequence resource="EMBL-CDS" id="AAD34058"/>
    </conflict>
</comment>
<organism>
    <name type="scientific">Homo sapiens</name>
    <name type="common">Human</name>
    <dbReference type="NCBI Taxonomy" id="9606"/>
    <lineage>
        <taxon>Eukaryota</taxon>
        <taxon>Metazoa</taxon>
        <taxon>Chordata</taxon>
        <taxon>Craniata</taxon>
        <taxon>Vertebrata</taxon>
        <taxon>Euteleostomi</taxon>
        <taxon>Mammalia</taxon>
        <taxon>Eutheria</taxon>
        <taxon>Euarchontoglires</taxon>
        <taxon>Primates</taxon>
        <taxon>Haplorrhini</taxon>
        <taxon>Catarrhini</taxon>
        <taxon>Hominidae</taxon>
        <taxon>Homo</taxon>
    </lineage>
</organism>
<feature type="transit peptide" description="Mitochondrion" evidence="5">
    <location>
        <begin position="1"/>
        <end position="53"/>
    </location>
</feature>
<feature type="chain" id="PRO_0000000888" description="Enoyl-[acyl-carrier-protein] reductase, mitochondrial">
    <location>
        <begin position="54"/>
        <end position="373"/>
    </location>
</feature>
<feature type="active site" description="Proton donor" evidence="1">
    <location>
        <position position="94"/>
    </location>
</feature>
<feature type="binding site" evidence="1">
    <location>
        <position position="167"/>
    </location>
    <ligand>
        <name>NADP(+)</name>
        <dbReference type="ChEBI" id="CHEBI:58349"/>
    </ligand>
</feature>
<feature type="binding site" evidence="1">
    <location>
        <begin position="193"/>
        <end position="196"/>
    </location>
    <ligand>
        <name>NADP(+)</name>
        <dbReference type="ChEBI" id="CHEBI:58349"/>
    </ligand>
</feature>
<feature type="binding site" evidence="1">
    <location>
        <begin position="216"/>
        <end position="218"/>
    </location>
    <ligand>
        <name>NADP(+)</name>
        <dbReference type="ChEBI" id="CHEBI:58349"/>
    </ligand>
</feature>
<feature type="binding site" evidence="1">
    <location>
        <begin position="285"/>
        <end position="288"/>
    </location>
    <ligand>
        <name>NADP(+)</name>
        <dbReference type="ChEBI" id="CHEBI:58349"/>
    </ligand>
</feature>
<feature type="binding site" evidence="1">
    <location>
        <begin position="310"/>
        <end position="312"/>
    </location>
    <ligand>
        <name>NADP(+)</name>
        <dbReference type="ChEBI" id="CHEBI:58349"/>
    </ligand>
</feature>
<feature type="binding site" evidence="1">
    <location>
        <position position="368"/>
    </location>
    <ligand>
        <name>NADP(+)</name>
        <dbReference type="ChEBI" id="CHEBI:58349"/>
    </ligand>
</feature>
<feature type="modified residue" description="N6-acetyllysine; alternate" evidence="2">
    <location>
        <position position="61"/>
    </location>
</feature>
<feature type="modified residue" description="N6-succinyllysine; alternate" evidence="2">
    <location>
        <position position="61"/>
    </location>
</feature>
<feature type="modified residue" description="N6-acetyllysine; alternate" evidence="2">
    <location>
        <position position="252"/>
    </location>
</feature>
<feature type="modified residue" description="N6-succinyllysine; alternate" evidence="2">
    <location>
        <position position="252"/>
    </location>
</feature>
<feature type="modified residue" description="N6-acetyllysine; alternate" evidence="2">
    <location>
        <position position="267"/>
    </location>
</feature>
<feature type="modified residue" description="N6-succinyllysine; alternate" evidence="2">
    <location>
        <position position="267"/>
    </location>
</feature>
<feature type="modified residue" description="N6-succinyllysine" evidence="2">
    <location>
        <position position="316"/>
    </location>
</feature>
<feature type="splice variant" id="VSP_041131" description="In isoform 2." evidence="18">
    <location>
        <begin position="1"/>
        <end position="76"/>
    </location>
</feature>
<feature type="sequence variant" id="VAR_027935" description="In dbSNP:rs1128400." evidence="6 8 9 15 16">
    <original>F</original>
    <variation>L</variation>
    <location>
        <position position="96"/>
    </location>
</feature>
<feature type="sequence variant" id="VAR_055486" description="In dbSNP:rs11544658.">
    <original>R</original>
    <variation>K</variation>
    <location>
        <position position="227"/>
    </location>
</feature>
<feature type="sequence variant" id="VAR_077997" description="In DYTOABG; probably decreased protein abundance; partially functional in a Drosophila mecr mutant model; dbSNP:rs762913101." evidence="12 13">
    <original>G</original>
    <variation>E</variation>
    <location>
        <position position="232"/>
    </location>
</feature>
<feature type="sequence variant" id="VAR_055487" description="In dbSNP:rs34835902.">
    <original>R</original>
    <variation>L</variation>
    <location>
        <position position="258"/>
    </location>
</feature>
<feature type="sequence variant" id="VAR_077998" description="In DYTOABG and OPA16; reduced protein levels in OPA16 patient cells; partially functional in a Drosophila mecr mutant model; dbSNP:rs145192716." evidence="12 13 14">
    <original>R</original>
    <variation>W</variation>
    <location>
        <position position="258"/>
    </location>
</feature>
<feature type="sequence variant" id="VAR_077999" description="In DYTOABG; probably decreased protein abundance; not functional in a Drosophila mecr mutant model." evidence="12 13">
    <location>
        <begin position="285"/>
        <end position="373"/>
    </location>
</feature>
<feature type="sequence variant" id="VAR_078000" description="In DYTOABG; dbSNP:rs759218713." evidence="12">
    <original>Y</original>
    <variation>C</variation>
    <location>
        <position position="285"/>
    </location>
</feature>
<feature type="mutagenesis site" description="Reduces catalytic activity by 68%." evidence="10">
    <original>S</original>
    <variation>A</variation>
    <location>
        <position position="85"/>
    </location>
</feature>
<feature type="mutagenesis site" description="Reduces catalytic activity by 95%. Strongly reduces affinity for trans-oct-2-enoyl-CoA." evidence="10">
    <original>Y</original>
    <variation>F</variation>
    <location>
        <position position="94"/>
    </location>
</feature>
<feature type="mutagenesis site" description="Strongly increases activity with trans-oct-2-enoyl-CoA. No effect on activity with trans-tetradec-2-enoyl-CoA. Decreases activity with trans-hexadec-2-enoyl-CoA by 20%." evidence="10">
    <original>I</original>
    <variation>M</variation>
    <location>
        <position position="129"/>
    </location>
</feature>
<feature type="mutagenesis site" description="Strongly increases activity with trans-oct-2-enoyl-CoA. Decreases activity with trans-tetradec-2-enoyl-CoA by 73%. Decreases activity with trans-hexadec-2-enoyl-CoA by 80%." evidence="10">
    <original>G</original>
    <variation>S</variation>
    <location>
        <position position="165"/>
    </location>
</feature>
<feature type="mutagenesis site" description="Reduces catalytic activity by 69%." evidence="10">
    <original>T</original>
    <variation>A</variation>
    <location>
        <position position="170"/>
    </location>
</feature>
<feature type="mutagenesis site" description="Reduces catalytic activity by 98%. Strongly reduces affinity for trans-oct-2-enoyl-CoA." evidence="10">
    <original>W</original>
    <variation>A</variation>
    <location>
        <position position="311"/>
    </location>
</feature>
<feature type="mutagenesis site" description="Reduces catalytic activity by 87%. Strongly reduces affinity for trans-oct-2-enoyl-CoA." evidence="10">
    <original>W</original>
    <variation>L</variation>
    <location>
        <position position="311"/>
    </location>
</feature>
<feature type="mutagenesis site" description="Strongly increases activity with trans-oct-2-enoyl-CoA. Decreases activity with trans-tetradec-2-enoyl-CoA by 25%. Decreases activity with trans-hexadec-2-enoyl-CoA by 68%." evidence="10">
    <original>F</original>
    <variation>Y</variation>
    <location>
        <position position="324"/>
    </location>
</feature>
<feature type="sequence conflict" description="In Ref. 1; AAD34058." evidence="20" ref="1">
    <original>AL</original>
    <variation>GV</variation>
    <location>
        <begin position="45"/>
        <end position="46"/>
    </location>
</feature>
<feature type="sequence conflict" description="In Ref. 2; CAG32984." evidence="20" ref="2">
    <original>M</original>
    <variation>I</variation>
    <location>
        <position position="373"/>
    </location>
</feature>
<feature type="strand" evidence="23">
    <location>
        <begin position="43"/>
        <end position="52"/>
    </location>
</feature>
<feature type="helix" evidence="23">
    <location>
        <begin position="54"/>
        <end position="57"/>
    </location>
</feature>
<feature type="strand" evidence="23">
    <location>
        <begin position="58"/>
        <end position="63"/>
    </location>
</feature>
<feature type="strand" evidence="23">
    <location>
        <begin position="72"/>
        <end position="81"/>
    </location>
</feature>
<feature type="helix" evidence="23">
    <location>
        <begin position="84"/>
        <end position="91"/>
    </location>
</feature>
<feature type="strand" evidence="23">
    <location>
        <begin position="100"/>
        <end position="103"/>
    </location>
</feature>
<feature type="strand" evidence="23">
    <location>
        <begin position="109"/>
        <end position="115"/>
    </location>
</feature>
<feature type="strand" evidence="23">
    <location>
        <begin position="127"/>
        <end position="133"/>
    </location>
</feature>
<feature type="strand" evidence="23">
    <location>
        <begin position="138"/>
        <end position="145"/>
    </location>
</feature>
<feature type="helix" evidence="23">
    <location>
        <begin position="146"/>
        <end position="148"/>
    </location>
</feature>
<feature type="strand" evidence="23">
    <location>
        <begin position="149"/>
        <end position="152"/>
    </location>
</feature>
<feature type="strand" evidence="23">
    <location>
        <begin position="154"/>
        <end position="156"/>
    </location>
</feature>
<feature type="helix" evidence="23">
    <location>
        <begin position="158"/>
        <end position="163"/>
    </location>
</feature>
<feature type="helix" evidence="23">
    <location>
        <begin position="167"/>
        <end position="177"/>
    </location>
</feature>
<feature type="strand" evidence="23">
    <location>
        <begin position="186"/>
        <end position="191"/>
    </location>
</feature>
<feature type="helix" evidence="23">
    <location>
        <begin position="195"/>
        <end position="207"/>
    </location>
</feature>
<feature type="strand" evidence="23">
    <location>
        <begin position="210"/>
        <end position="215"/>
    </location>
</feature>
<feature type="helix" evidence="23">
    <location>
        <begin position="221"/>
        <end position="230"/>
    </location>
</feature>
<feature type="strand" evidence="23">
    <location>
        <begin position="234"/>
        <end position="238"/>
    </location>
</feature>
<feature type="helix" evidence="23">
    <location>
        <begin position="239"/>
        <end position="243"/>
    </location>
</feature>
<feature type="helix" evidence="23">
    <location>
        <begin position="245"/>
        <end position="249"/>
    </location>
</feature>
<feature type="strand" evidence="23">
    <location>
        <begin position="252"/>
        <end position="254"/>
    </location>
</feature>
<feature type="strand" evidence="23">
    <location>
        <begin position="258"/>
        <end position="264"/>
    </location>
</feature>
<feature type="helix" evidence="23">
    <location>
        <begin position="266"/>
        <end position="273"/>
    </location>
</feature>
<feature type="strand" evidence="23">
    <location>
        <begin position="281"/>
        <end position="284"/>
    </location>
</feature>
<feature type="strand" evidence="24">
    <location>
        <begin position="293"/>
        <end position="295"/>
    </location>
</feature>
<feature type="helix" evidence="23">
    <location>
        <begin position="297"/>
        <end position="302"/>
    </location>
</feature>
<feature type="strand" evidence="23">
    <location>
        <begin position="306"/>
        <end position="309"/>
    </location>
</feature>
<feature type="helix" evidence="23">
    <location>
        <begin position="312"/>
        <end position="318"/>
    </location>
</feature>
<feature type="helix" evidence="23">
    <location>
        <begin position="321"/>
        <end position="336"/>
    </location>
</feature>
<feature type="strand" evidence="23">
    <location>
        <begin position="345"/>
        <end position="349"/>
    </location>
</feature>
<feature type="helix" evidence="23">
    <location>
        <begin position="350"/>
        <end position="352"/>
    </location>
</feature>
<feature type="helix" evidence="23">
    <location>
        <begin position="353"/>
        <end position="360"/>
    </location>
</feature>
<feature type="strand" evidence="23">
    <location>
        <begin position="362"/>
        <end position="364"/>
    </location>
</feature>
<feature type="strand" evidence="23">
    <location>
        <begin position="366"/>
        <end position="372"/>
    </location>
</feature>
<protein>
    <recommendedName>
        <fullName evidence="20">Enoyl-[acyl-carrier-protein] reductase, mitochondrial</fullName>
        <ecNumber evidence="21 22">1.3.1.104</ecNumber>
    </recommendedName>
    <alternativeName>
        <fullName evidence="17 19">2-enoyl thioester reductase</fullName>
    </alternativeName>
    <alternativeName>
        <fullName>Nuclear receptor-binding factor 1</fullName>
        <shortName>HsNrbf-1</shortName>
        <shortName>NRBF-1</shortName>
    </alternativeName>
</protein>
<dbReference type="EC" id="1.3.1.104" evidence="21 22"/>
<dbReference type="EMBL" id="AF151821">
    <property type="protein sequence ID" value="AAD34058.1"/>
    <property type="status" value="ALT_FRAME"/>
    <property type="molecule type" value="mRNA"/>
</dbReference>
<dbReference type="EMBL" id="AK095099">
    <property type="protein sequence ID" value="BAG52984.1"/>
    <property type="molecule type" value="mRNA"/>
</dbReference>
<dbReference type="EMBL" id="CR456703">
    <property type="protein sequence ID" value="CAG32984.1"/>
    <property type="molecule type" value="mRNA"/>
</dbReference>
<dbReference type="EMBL" id="AL590729">
    <property type="status" value="NOT_ANNOTATED_CDS"/>
    <property type="molecule type" value="Genomic_DNA"/>
</dbReference>
<dbReference type="EMBL" id="CH471059">
    <property type="protein sequence ID" value="EAX07655.1"/>
    <property type="molecule type" value="Genomic_DNA"/>
</dbReference>
<dbReference type="EMBL" id="BC001419">
    <property type="protein sequence ID" value="AAH01419.1"/>
    <property type="molecule type" value="mRNA"/>
</dbReference>
<dbReference type="CCDS" id="CCDS30659.1">
    <molecule id="Q9BV79-1"/>
</dbReference>
<dbReference type="CCDS" id="CCDS30660.1">
    <molecule id="Q9BV79-2"/>
</dbReference>
<dbReference type="RefSeq" id="NP_001019903.3">
    <molecule id="Q9BV79-2"/>
    <property type="nucleotide sequence ID" value="NM_001024732.4"/>
</dbReference>
<dbReference type="RefSeq" id="NP_001336640.1">
    <molecule id="Q9BV79-2"/>
    <property type="nucleotide sequence ID" value="NM_001349711.2"/>
</dbReference>
<dbReference type="RefSeq" id="NP_001336641.1">
    <molecule id="Q9BV79-2"/>
    <property type="nucleotide sequence ID" value="NM_001349712.2"/>
</dbReference>
<dbReference type="RefSeq" id="NP_001336642.1">
    <molecule id="Q9BV79-2"/>
    <property type="nucleotide sequence ID" value="NM_001349713.2"/>
</dbReference>
<dbReference type="RefSeq" id="NP_001336643.1">
    <molecule id="Q9BV79-2"/>
    <property type="nucleotide sequence ID" value="NM_001349714.2"/>
</dbReference>
<dbReference type="RefSeq" id="NP_057095.4">
    <molecule id="Q9BV79-1"/>
    <property type="nucleotide sequence ID" value="NM_016011.5"/>
</dbReference>
<dbReference type="RefSeq" id="XP_005245944.1">
    <property type="nucleotide sequence ID" value="XM_005245887.2"/>
</dbReference>
<dbReference type="RefSeq" id="XP_016856902.1">
    <property type="nucleotide sequence ID" value="XM_017001413.1"/>
</dbReference>
<dbReference type="RefSeq" id="XP_016856903.1">
    <property type="nucleotide sequence ID" value="XM_017001414.1"/>
</dbReference>
<dbReference type="RefSeq" id="XP_016856904.1">
    <property type="nucleotide sequence ID" value="XM_017001415.1"/>
</dbReference>
<dbReference type="RefSeq" id="XP_047278007.1">
    <molecule id="Q9BV79-2"/>
    <property type="nucleotide sequence ID" value="XM_047422051.1"/>
</dbReference>
<dbReference type="RefSeq" id="XP_054192865.1">
    <molecule id="Q9BV79-2"/>
    <property type="nucleotide sequence ID" value="XM_054336890.1"/>
</dbReference>
<dbReference type="PDB" id="1ZSY">
    <property type="method" value="X-ray"/>
    <property type="resolution" value="1.75 A"/>
    <property type="chains" value="A=40-373"/>
</dbReference>
<dbReference type="PDB" id="2VCY">
    <property type="method" value="X-ray"/>
    <property type="resolution" value="2.41 A"/>
    <property type="chains" value="A/B=31-373"/>
</dbReference>
<dbReference type="PDB" id="7AYB">
    <property type="method" value="X-ray"/>
    <property type="resolution" value="1.85 A"/>
    <property type="chains" value="A=31-373"/>
</dbReference>
<dbReference type="PDB" id="7AYC">
    <property type="method" value="X-ray"/>
    <property type="resolution" value="2.02 A"/>
    <property type="chains" value="A=31-373"/>
</dbReference>
<dbReference type="PDBsum" id="1ZSY"/>
<dbReference type="PDBsum" id="2VCY"/>
<dbReference type="PDBsum" id="7AYB"/>
<dbReference type="PDBsum" id="7AYC"/>
<dbReference type="SMR" id="Q9BV79"/>
<dbReference type="BioGRID" id="119291">
    <property type="interactions" value="38"/>
</dbReference>
<dbReference type="FunCoup" id="Q9BV79">
    <property type="interactions" value="2328"/>
</dbReference>
<dbReference type="IntAct" id="Q9BV79">
    <property type="interactions" value="13"/>
</dbReference>
<dbReference type="STRING" id="9606.ENSP00000263702"/>
<dbReference type="SwissLipids" id="SLP:000001054"/>
<dbReference type="iPTMnet" id="Q9BV79"/>
<dbReference type="PhosphoSitePlus" id="Q9BV79"/>
<dbReference type="BioMuta" id="MECR"/>
<dbReference type="DMDM" id="334302832"/>
<dbReference type="jPOST" id="Q9BV79"/>
<dbReference type="MassIVE" id="Q9BV79"/>
<dbReference type="PaxDb" id="9606-ENSP00000263702"/>
<dbReference type="PeptideAtlas" id="Q9BV79"/>
<dbReference type="ProteomicsDB" id="79177">
    <molecule id="Q9BV79-1"/>
</dbReference>
<dbReference type="ProteomicsDB" id="79178">
    <molecule id="Q9BV79-2"/>
</dbReference>
<dbReference type="Pumba" id="Q9BV79"/>
<dbReference type="Antibodypedia" id="16646">
    <property type="antibodies" value="173 antibodies from 26 providers"/>
</dbReference>
<dbReference type="DNASU" id="51102"/>
<dbReference type="Ensembl" id="ENST00000263702.11">
    <molecule id="Q9BV79-1"/>
    <property type="protein sequence ID" value="ENSP00000263702.6"/>
    <property type="gene ID" value="ENSG00000116353.16"/>
</dbReference>
<dbReference type="Ensembl" id="ENST00000373791.7">
    <molecule id="Q9BV79-2"/>
    <property type="protein sequence ID" value="ENSP00000362896.3"/>
    <property type="gene ID" value="ENSG00000116353.16"/>
</dbReference>
<dbReference type="GeneID" id="51102"/>
<dbReference type="KEGG" id="hsa:51102"/>
<dbReference type="MANE-Select" id="ENST00000263702.11">
    <property type="protein sequence ID" value="ENSP00000263702.6"/>
    <property type="RefSeq nucleotide sequence ID" value="NM_016011.5"/>
    <property type="RefSeq protein sequence ID" value="NP_057095.4"/>
</dbReference>
<dbReference type="UCSC" id="uc001brp.3">
    <molecule id="Q9BV79-1"/>
    <property type="organism name" value="human"/>
</dbReference>
<dbReference type="AGR" id="HGNC:19691"/>
<dbReference type="CTD" id="51102"/>
<dbReference type="DisGeNET" id="51102"/>
<dbReference type="GeneCards" id="MECR"/>
<dbReference type="GeneReviews" id="MECR"/>
<dbReference type="HGNC" id="HGNC:19691">
    <property type="gene designation" value="MECR"/>
</dbReference>
<dbReference type="HPA" id="ENSG00000116353">
    <property type="expression patterns" value="Low tissue specificity"/>
</dbReference>
<dbReference type="MalaCards" id="MECR"/>
<dbReference type="MIM" id="608205">
    <property type="type" value="gene"/>
</dbReference>
<dbReference type="MIM" id="617282">
    <property type="type" value="phenotype"/>
</dbReference>
<dbReference type="MIM" id="620629">
    <property type="type" value="phenotype"/>
</dbReference>
<dbReference type="neXtProt" id="NX_Q9BV79"/>
<dbReference type="OpenTargets" id="ENSG00000116353"/>
<dbReference type="Orphanet" id="508093">
    <property type="disease" value="MEPAN syndrome"/>
</dbReference>
<dbReference type="PharmGKB" id="PA142671471"/>
<dbReference type="VEuPathDB" id="HostDB:ENSG00000116353"/>
<dbReference type="eggNOG" id="KOG0025">
    <property type="taxonomic scope" value="Eukaryota"/>
</dbReference>
<dbReference type="GeneTree" id="ENSGT00940000156592"/>
<dbReference type="HOGENOM" id="CLU_026673_17_1_1"/>
<dbReference type="InParanoid" id="Q9BV79"/>
<dbReference type="OMA" id="YGYTQSK"/>
<dbReference type="OrthoDB" id="7482721at2759"/>
<dbReference type="PAN-GO" id="Q9BV79">
    <property type="GO annotations" value="3 GO annotations based on evolutionary models"/>
</dbReference>
<dbReference type="PhylomeDB" id="Q9BV79"/>
<dbReference type="TreeFam" id="TF312886"/>
<dbReference type="BioCyc" id="MetaCyc:HS04010-MONOMER"/>
<dbReference type="PathwayCommons" id="Q9BV79"/>
<dbReference type="Reactome" id="R-HSA-77346">
    <property type="pathway name" value="Beta oxidation of decanoyl-CoA to octanoyl-CoA-CoA"/>
</dbReference>
<dbReference type="SABIO-RK" id="Q9BV79"/>
<dbReference type="SignaLink" id="Q9BV79"/>
<dbReference type="BioGRID-ORCS" id="51102">
    <property type="hits" value="114 hits in 1163 CRISPR screens"/>
</dbReference>
<dbReference type="ChiTaRS" id="MECR">
    <property type="organism name" value="human"/>
</dbReference>
<dbReference type="EvolutionaryTrace" id="Q9BV79"/>
<dbReference type="GeneWiki" id="MECR"/>
<dbReference type="GenomeRNAi" id="51102"/>
<dbReference type="Pharos" id="Q9BV79">
    <property type="development level" value="Tbio"/>
</dbReference>
<dbReference type="PRO" id="PR:Q9BV79"/>
<dbReference type="Proteomes" id="UP000005640">
    <property type="component" value="Chromosome 1"/>
</dbReference>
<dbReference type="RNAct" id="Q9BV79">
    <property type="molecule type" value="protein"/>
</dbReference>
<dbReference type="Bgee" id="ENSG00000116353">
    <property type="expression patterns" value="Expressed in apex of heart and 177 other cell types or tissues"/>
</dbReference>
<dbReference type="ExpressionAtlas" id="Q9BV79">
    <property type="expression patterns" value="baseline and differential"/>
</dbReference>
<dbReference type="GO" id="GO:0016020">
    <property type="term" value="C:membrane"/>
    <property type="evidence" value="ECO:0007669"/>
    <property type="project" value="GOC"/>
</dbReference>
<dbReference type="GO" id="GO:0005759">
    <property type="term" value="C:mitochondrial matrix"/>
    <property type="evidence" value="ECO:0000304"/>
    <property type="project" value="Reactome"/>
</dbReference>
<dbReference type="GO" id="GO:0005739">
    <property type="term" value="C:mitochondrion"/>
    <property type="evidence" value="ECO:0000314"/>
    <property type="project" value="HPA"/>
</dbReference>
<dbReference type="GO" id="GO:0005634">
    <property type="term" value="C:nucleus"/>
    <property type="evidence" value="ECO:0007669"/>
    <property type="project" value="UniProtKB-SubCell"/>
</dbReference>
<dbReference type="GO" id="GO:0141148">
    <property type="term" value="F:enoyl-[acyl-carrier-protein] reductase (NADPH) activity"/>
    <property type="evidence" value="ECO:0000314"/>
    <property type="project" value="UniProtKB"/>
</dbReference>
<dbReference type="GO" id="GO:0046513">
    <property type="term" value="P:ceramide biosynthetic process"/>
    <property type="evidence" value="ECO:0000315"/>
    <property type="project" value="UniProtKB"/>
</dbReference>
<dbReference type="GO" id="GO:0006633">
    <property type="term" value="P:fatty acid biosynthetic process"/>
    <property type="evidence" value="ECO:0007669"/>
    <property type="project" value="UniProtKB-KW"/>
</dbReference>
<dbReference type="GO" id="GO:0006631">
    <property type="term" value="P:fatty acid metabolic process"/>
    <property type="evidence" value="ECO:0000314"/>
    <property type="project" value="UniProtKB"/>
</dbReference>
<dbReference type="GO" id="GO:0006879">
    <property type="term" value="P:intracellular iron ion homeostasis"/>
    <property type="evidence" value="ECO:0000315"/>
    <property type="project" value="UniProtKB"/>
</dbReference>
<dbReference type="CDD" id="cd08290">
    <property type="entry name" value="ETR"/>
    <property type="match status" value="1"/>
</dbReference>
<dbReference type="FunFam" id="3.40.50.720:FF:000112">
    <property type="entry name" value="Enoyl-[acyl-carrier-protein] reductase 1, mitochondrial"/>
    <property type="match status" value="1"/>
</dbReference>
<dbReference type="FunFam" id="3.90.180.10:FF:000010">
    <property type="entry name" value="Enoyl-[acyl-carrier-protein] reductase, mitochondrial"/>
    <property type="match status" value="1"/>
</dbReference>
<dbReference type="Gene3D" id="3.90.180.10">
    <property type="entry name" value="Medium-chain alcohol dehydrogenases, catalytic domain"/>
    <property type="match status" value="1"/>
</dbReference>
<dbReference type="Gene3D" id="3.40.50.720">
    <property type="entry name" value="NAD(P)-binding Rossmann-like Domain"/>
    <property type="match status" value="1"/>
</dbReference>
<dbReference type="InterPro" id="IPR013149">
    <property type="entry name" value="ADH-like_C"/>
</dbReference>
<dbReference type="InterPro" id="IPR013154">
    <property type="entry name" value="ADH-like_N"/>
</dbReference>
<dbReference type="InterPro" id="IPR011032">
    <property type="entry name" value="GroES-like_sf"/>
</dbReference>
<dbReference type="InterPro" id="IPR051034">
    <property type="entry name" value="Mito_Enoyl-ACP_Reductase"/>
</dbReference>
<dbReference type="InterPro" id="IPR036291">
    <property type="entry name" value="NAD(P)-bd_dom_sf"/>
</dbReference>
<dbReference type="InterPro" id="IPR020843">
    <property type="entry name" value="PKS_ER"/>
</dbReference>
<dbReference type="PANTHER" id="PTHR43981">
    <property type="entry name" value="ENOYL-[ACYL-CARRIER-PROTEIN] REDUCTASE, MITOCHONDRIAL"/>
    <property type="match status" value="1"/>
</dbReference>
<dbReference type="PANTHER" id="PTHR43981:SF9">
    <property type="entry name" value="ENOYL-[ACYL-CARRIER-PROTEIN] REDUCTASE, MITOCHONDRIAL"/>
    <property type="match status" value="1"/>
</dbReference>
<dbReference type="Pfam" id="PF08240">
    <property type="entry name" value="ADH_N"/>
    <property type="match status" value="1"/>
</dbReference>
<dbReference type="Pfam" id="PF00107">
    <property type="entry name" value="ADH_zinc_N"/>
    <property type="match status" value="1"/>
</dbReference>
<dbReference type="SMART" id="SM00829">
    <property type="entry name" value="PKS_ER"/>
    <property type="match status" value="1"/>
</dbReference>
<dbReference type="SUPFAM" id="SSF50129">
    <property type="entry name" value="GroES-like"/>
    <property type="match status" value="1"/>
</dbReference>
<dbReference type="SUPFAM" id="SSF51735">
    <property type="entry name" value="NAD(P)-binding Rossmann-fold domains"/>
    <property type="match status" value="1"/>
</dbReference>
<gene>
    <name type="primary">MECR</name>
    <name type="synonym">NBRF1</name>
    <name type="ORF">CGI-63</name>
</gene>
<reference key="1">
    <citation type="journal article" date="2000" name="Genome Res.">
        <title>Identification of novel human genes evolutionarily conserved in Caenorhabditis elegans by comparative proteomics.</title>
        <authorList>
            <person name="Lai C.-H."/>
            <person name="Chou C.-Y."/>
            <person name="Ch'ang L.-Y."/>
            <person name="Liu C.-S."/>
            <person name="Lin W.-C."/>
        </authorList>
    </citation>
    <scope>NUCLEOTIDE SEQUENCE [LARGE SCALE MRNA] (ISOFORM 1)</scope>
    <scope>VARIANT LEU-96</scope>
</reference>
<reference key="2">
    <citation type="journal article" date="2004" name="Nat. Genet.">
        <title>Complete sequencing and characterization of 21,243 full-length human cDNAs.</title>
        <authorList>
            <person name="Ota T."/>
            <person name="Suzuki Y."/>
            <person name="Nishikawa T."/>
            <person name="Otsuki T."/>
            <person name="Sugiyama T."/>
            <person name="Irie R."/>
            <person name="Wakamatsu A."/>
            <person name="Hayashi K."/>
            <person name="Sato H."/>
            <person name="Nagai K."/>
            <person name="Kimura K."/>
            <person name="Makita H."/>
            <person name="Sekine M."/>
            <person name="Obayashi M."/>
            <person name="Nishi T."/>
            <person name="Shibahara T."/>
            <person name="Tanaka T."/>
            <person name="Ishii S."/>
            <person name="Yamamoto J."/>
            <person name="Saito K."/>
            <person name="Kawai Y."/>
            <person name="Isono Y."/>
            <person name="Nakamura Y."/>
            <person name="Nagahari K."/>
            <person name="Murakami K."/>
            <person name="Yasuda T."/>
            <person name="Iwayanagi T."/>
            <person name="Wagatsuma M."/>
            <person name="Shiratori A."/>
            <person name="Sudo H."/>
            <person name="Hosoiri T."/>
            <person name="Kaku Y."/>
            <person name="Kodaira H."/>
            <person name="Kondo H."/>
            <person name="Sugawara M."/>
            <person name="Takahashi M."/>
            <person name="Kanda K."/>
            <person name="Yokoi T."/>
            <person name="Furuya T."/>
            <person name="Kikkawa E."/>
            <person name="Omura Y."/>
            <person name="Abe K."/>
            <person name="Kamihara K."/>
            <person name="Katsuta N."/>
            <person name="Sato K."/>
            <person name="Tanikawa M."/>
            <person name="Yamazaki M."/>
            <person name="Ninomiya K."/>
            <person name="Ishibashi T."/>
            <person name="Yamashita H."/>
            <person name="Murakawa K."/>
            <person name="Fujimori K."/>
            <person name="Tanai H."/>
            <person name="Kimata M."/>
            <person name="Watanabe M."/>
            <person name="Hiraoka S."/>
            <person name="Chiba Y."/>
            <person name="Ishida S."/>
            <person name="Ono Y."/>
            <person name="Takiguchi S."/>
            <person name="Watanabe S."/>
            <person name="Yosida M."/>
            <person name="Hotuta T."/>
            <person name="Kusano J."/>
            <person name="Kanehori K."/>
            <person name="Takahashi-Fujii A."/>
            <person name="Hara H."/>
            <person name="Tanase T.-O."/>
            <person name="Nomura Y."/>
            <person name="Togiya S."/>
            <person name="Komai F."/>
            <person name="Hara R."/>
            <person name="Takeuchi K."/>
            <person name="Arita M."/>
            <person name="Imose N."/>
            <person name="Musashino K."/>
            <person name="Yuuki H."/>
            <person name="Oshima A."/>
            <person name="Sasaki N."/>
            <person name="Aotsuka S."/>
            <person name="Yoshikawa Y."/>
            <person name="Matsunawa H."/>
            <person name="Ichihara T."/>
            <person name="Shiohata N."/>
            <person name="Sano S."/>
            <person name="Moriya S."/>
            <person name="Momiyama H."/>
            <person name="Satoh N."/>
            <person name="Takami S."/>
            <person name="Terashima Y."/>
            <person name="Suzuki O."/>
            <person name="Nakagawa S."/>
            <person name="Senoh A."/>
            <person name="Mizoguchi H."/>
            <person name="Goto Y."/>
            <person name="Shimizu F."/>
            <person name="Wakebe H."/>
            <person name="Hishigaki H."/>
            <person name="Watanabe T."/>
            <person name="Sugiyama A."/>
            <person name="Takemoto M."/>
            <person name="Kawakami B."/>
            <person name="Yamazaki M."/>
            <person name="Watanabe K."/>
            <person name="Kumagai A."/>
            <person name="Itakura S."/>
            <person name="Fukuzumi Y."/>
            <person name="Fujimori Y."/>
            <person name="Komiyama M."/>
            <person name="Tashiro H."/>
            <person name="Tanigami A."/>
            <person name="Fujiwara T."/>
            <person name="Ono T."/>
            <person name="Yamada K."/>
            <person name="Fujii Y."/>
            <person name="Ozaki K."/>
            <person name="Hirao M."/>
            <person name="Ohmori Y."/>
            <person name="Kawabata A."/>
            <person name="Hikiji T."/>
            <person name="Kobatake N."/>
            <person name="Inagaki H."/>
            <person name="Ikema Y."/>
            <person name="Okamoto S."/>
            <person name="Okitani R."/>
            <person name="Kawakami T."/>
            <person name="Noguchi S."/>
            <person name="Itoh T."/>
            <person name="Shigeta K."/>
            <person name="Senba T."/>
            <person name="Matsumura K."/>
            <person name="Nakajima Y."/>
            <person name="Mizuno T."/>
            <person name="Morinaga M."/>
            <person name="Sasaki M."/>
            <person name="Togashi T."/>
            <person name="Oyama M."/>
            <person name="Hata H."/>
            <person name="Watanabe M."/>
            <person name="Komatsu T."/>
            <person name="Mizushima-Sugano J."/>
            <person name="Satoh T."/>
            <person name="Shirai Y."/>
            <person name="Takahashi Y."/>
            <person name="Nakagawa K."/>
            <person name="Okumura K."/>
            <person name="Nagase T."/>
            <person name="Nomura N."/>
            <person name="Kikuchi H."/>
            <person name="Masuho Y."/>
            <person name="Yamashita R."/>
            <person name="Nakai K."/>
            <person name="Yada T."/>
            <person name="Nakamura Y."/>
            <person name="Ohara O."/>
            <person name="Isogai T."/>
            <person name="Sugano S."/>
        </authorList>
    </citation>
    <scope>NUCLEOTIDE SEQUENCE [LARGE SCALE MRNA] (ISOFORM 2)</scope>
    <scope>VARIANT LEU-96</scope>
    <source>
        <tissue>Hippocampus</tissue>
    </source>
</reference>
<reference key="3">
    <citation type="submission" date="2004-06" db="EMBL/GenBank/DDBJ databases">
        <title>Cloning of human full open reading frames in Gateway(TM) system entry vector (pDONR201).</title>
        <authorList>
            <person name="Ebert L."/>
            <person name="Schick M."/>
            <person name="Neubert P."/>
            <person name="Schatten R."/>
            <person name="Henze S."/>
            <person name="Korn B."/>
        </authorList>
    </citation>
    <scope>NUCLEOTIDE SEQUENCE [LARGE SCALE MRNA] (ISOFORM 1)</scope>
    <scope>VARIANT LEU-96</scope>
</reference>
<reference key="4">
    <citation type="journal article" date="2006" name="Nature">
        <title>The DNA sequence and biological annotation of human chromosome 1.</title>
        <authorList>
            <person name="Gregory S.G."/>
            <person name="Barlow K.F."/>
            <person name="McLay K.E."/>
            <person name="Kaul R."/>
            <person name="Swarbreck D."/>
            <person name="Dunham A."/>
            <person name="Scott C.E."/>
            <person name="Howe K.L."/>
            <person name="Woodfine K."/>
            <person name="Spencer C.C.A."/>
            <person name="Jones M.C."/>
            <person name="Gillson C."/>
            <person name="Searle S."/>
            <person name="Zhou Y."/>
            <person name="Kokocinski F."/>
            <person name="McDonald L."/>
            <person name="Evans R."/>
            <person name="Phillips K."/>
            <person name="Atkinson A."/>
            <person name="Cooper R."/>
            <person name="Jones C."/>
            <person name="Hall R.E."/>
            <person name="Andrews T.D."/>
            <person name="Lloyd C."/>
            <person name="Ainscough R."/>
            <person name="Almeida J.P."/>
            <person name="Ambrose K.D."/>
            <person name="Anderson F."/>
            <person name="Andrew R.W."/>
            <person name="Ashwell R.I.S."/>
            <person name="Aubin K."/>
            <person name="Babbage A.K."/>
            <person name="Bagguley C.L."/>
            <person name="Bailey J."/>
            <person name="Beasley H."/>
            <person name="Bethel G."/>
            <person name="Bird C.P."/>
            <person name="Bray-Allen S."/>
            <person name="Brown J.Y."/>
            <person name="Brown A.J."/>
            <person name="Buckley D."/>
            <person name="Burton J."/>
            <person name="Bye J."/>
            <person name="Carder C."/>
            <person name="Chapman J.C."/>
            <person name="Clark S.Y."/>
            <person name="Clarke G."/>
            <person name="Clee C."/>
            <person name="Cobley V."/>
            <person name="Collier R.E."/>
            <person name="Corby N."/>
            <person name="Coville G.J."/>
            <person name="Davies J."/>
            <person name="Deadman R."/>
            <person name="Dunn M."/>
            <person name="Earthrowl M."/>
            <person name="Ellington A.G."/>
            <person name="Errington H."/>
            <person name="Frankish A."/>
            <person name="Frankland J."/>
            <person name="French L."/>
            <person name="Garner P."/>
            <person name="Garnett J."/>
            <person name="Gay L."/>
            <person name="Ghori M.R.J."/>
            <person name="Gibson R."/>
            <person name="Gilby L.M."/>
            <person name="Gillett W."/>
            <person name="Glithero R.J."/>
            <person name="Grafham D.V."/>
            <person name="Griffiths C."/>
            <person name="Griffiths-Jones S."/>
            <person name="Grocock R."/>
            <person name="Hammond S."/>
            <person name="Harrison E.S.I."/>
            <person name="Hart E."/>
            <person name="Haugen E."/>
            <person name="Heath P.D."/>
            <person name="Holmes S."/>
            <person name="Holt K."/>
            <person name="Howden P.J."/>
            <person name="Hunt A.R."/>
            <person name="Hunt S.E."/>
            <person name="Hunter G."/>
            <person name="Isherwood J."/>
            <person name="James R."/>
            <person name="Johnson C."/>
            <person name="Johnson D."/>
            <person name="Joy A."/>
            <person name="Kay M."/>
            <person name="Kershaw J.K."/>
            <person name="Kibukawa M."/>
            <person name="Kimberley A.M."/>
            <person name="King A."/>
            <person name="Knights A.J."/>
            <person name="Lad H."/>
            <person name="Laird G."/>
            <person name="Lawlor S."/>
            <person name="Leongamornlert D.A."/>
            <person name="Lloyd D.M."/>
            <person name="Loveland J."/>
            <person name="Lovell J."/>
            <person name="Lush M.J."/>
            <person name="Lyne R."/>
            <person name="Martin S."/>
            <person name="Mashreghi-Mohammadi M."/>
            <person name="Matthews L."/>
            <person name="Matthews N.S.W."/>
            <person name="McLaren S."/>
            <person name="Milne S."/>
            <person name="Mistry S."/>
            <person name="Moore M.J.F."/>
            <person name="Nickerson T."/>
            <person name="O'Dell C.N."/>
            <person name="Oliver K."/>
            <person name="Palmeiri A."/>
            <person name="Palmer S.A."/>
            <person name="Parker A."/>
            <person name="Patel D."/>
            <person name="Pearce A.V."/>
            <person name="Peck A.I."/>
            <person name="Pelan S."/>
            <person name="Phelps K."/>
            <person name="Phillimore B.J."/>
            <person name="Plumb R."/>
            <person name="Rajan J."/>
            <person name="Raymond C."/>
            <person name="Rouse G."/>
            <person name="Saenphimmachak C."/>
            <person name="Sehra H.K."/>
            <person name="Sheridan E."/>
            <person name="Shownkeen R."/>
            <person name="Sims S."/>
            <person name="Skuce C.D."/>
            <person name="Smith M."/>
            <person name="Steward C."/>
            <person name="Subramanian S."/>
            <person name="Sycamore N."/>
            <person name="Tracey A."/>
            <person name="Tromans A."/>
            <person name="Van Helmond Z."/>
            <person name="Wall M."/>
            <person name="Wallis J.M."/>
            <person name="White S."/>
            <person name="Whitehead S.L."/>
            <person name="Wilkinson J.E."/>
            <person name="Willey D.L."/>
            <person name="Williams H."/>
            <person name="Wilming L."/>
            <person name="Wray P.W."/>
            <person name="Wu Z."/>
            <person name="Coulson A."/>
            <person name="Vaudin M."/>
            <person name="Sulston J.E."/>
            <person name="Durbin R.M."/>
            <person name="Hubbard T."/>
            <person name="Wooster R."/>
            <person name="Dunham I."/>
            <person name="Carter N.P."/>
            <person name="McVean G."/>
            <person name="Ross M.T."/>
            <person name="Harrow J."/>
            <person name="Olson M.V."/>
            <person name="Beck S."/>
            <person name="Rogers J."/>
            <person name="Bentley D.R."/>
        </authorList>
    </citation>
    <scope>NUCLEOTIDE SEQUENCE [LARGE SCALE GENOMIC DNA]</scope>
</reference>
<reference key="5">
    <citation type="submission" date="2005-09" db="EMBL/GenBank/DDBJ databases">
        <authorList>
            <person name="Mural R.J."/>
            <person name="Istrail S."/>
            <person name="Sutton G.G."/>
            <person name="Florea L."/>
            <person name="Halpern A.L."/>
            <person name="Mobarry C.M."/>
            <person name="Lippert R."/>
            <person name="Walenz B."/>
            <person name="Shatkay H."/>
            <person name="Dew I."/>
            <person name="Miller J.R."/>
            <person name="Flanigan M.J."/>
            <person name="Edwards N.J."/>
            <person name="Bolanos R."/>
            <person name="Fasulo D."/>
            <person name="Halldorsson B.V."/>
            <person name="Hannenhalli S."/>
            <person name="Turner R."/>
            <person name="Yooseph S."/>
            <person name="Lu F."/>
            <person name="Nusskern D.R."/>
            <person name="Shue B.C."/>
            <person name="Zheng X.H."/>
            <person name="Zhong F."/>
            <person name="Delcher A.L."/>
            <person name="Huson D.H."/>
            <person name="Kravitz S.A."/>
            <person name="Mouchard L."/>
            <person name="Reinert K."/>
            <person name="Remington K.A."/>
            <person name="Clark A.G."/>
            <person name="Waterman M.S."/>
            <person name="Eichler E.E."/>
            <person name="Adams M.D."/>
            <person name="Hunkapiller M.W."/>
            <person name="Myers E.W."/>
            <person name="Venter J.C."/>
        </authorList>
    </citation>
    <scope>NUCLEOTIDE SEQUENCE [LARGE SCALE GENOMIC DNA]</scope>
    <scope>VARIANT LEU-96</scope>
</reference>
<reference key="6">
    <citation type="journal article" date="2004" name="Genome Res.">
        <title>The status, quality, and expansion of the NIH full-length cDNA project: the Mammalian Gene Collection (MGC).</title>
        <authorList>
            <consortium name="The MGC Project Team"/>
        </authorList>
    </citation>
    <scope>NUCLEOTIDE SEQUENCE [LARGE SCALE MRNA] (ISOFORM 1)</scope>
    <scope>VARIANT LEU-96</scope>
    <source>
        <tissue>Placenta</tissue>
    </source>
</reference>
<reference key="7">
    <citation type="journal article" date="2003" name="J. Biol. Chem.">
        <title>Characterization of 2-enoyl thioester reductase from mammals: an ortholog of Ybr026p/Mrf1'p of the yeast mitochondrial fatty acid synthesis type II.</title>
        <authorList>
            <person name="Miinalainen I.J."/>
            <person name="Chen Z.-J."/>
            <person name="Torkko J.M."/>
            <person name="Pirilae P.L."/>
            <person name="Sormunen R.T."/>
            <person name="Bergmann U."/>
            <person name="Qin Y.-M."/>
            <person name="Hiltunen J.K."/>
        </authorList>
    </citation>
    <scope>FUNCTION</scope>
    <scope>CATALYTIC ACTIVITY</scope>
    <scope>BIOPHYSICOCHEMICAL PROPERTIES</scope>
    <scope>SUBUNIT</scope>
    <scope>SUBCELLULAR LOCATION</scope>
    <scope>TISSUE SPECIFICITY</scope>
</reference>
<reference key="8">
    <citation type="journal article" date="2011" name="BMC Syst. Biol.">
        <title>Initial characterization of the human central proteome.</title>
        <authorList>
            <person name="Burkard T.R."/>
            <person name="Planyavsky M."/>
            <person name="Kaupe I."/>
            <person name="Breitwieser F.P."/>
            <person name="Buerckstuemmer T."/>
            <person name="Bennett K.L."/>
            <person name="Superti-Furga G."/>
            <person name="Colinge J."/>
        </authorList>
    </citation>
    <scope>IDENTIFICATION BY MASS SPECTROMETRY [LARGE SCALE ANALYSIS]</scope>
</reference>
<reference key="9">
    <citation type="journal article" date="2014" name="Endocrinol. Metab.">
        <title>A novel cytosolic isoform of mitochondrial Trans-2-Enoyl-CoA reductase enhances peroxisome proliferator-activated receptor alpha activity.</title>
        <authorList>
            <person name="Kim D.G."/>
            <person name="Yoo J.C."/>
            <person name="Kim E."/>
            <person name="Lee Y.S."/>
            <person name="Yarishkin O.V."/>
            <person name="Lee da Y."/>
            <person name="Lee K.H."/>
            <person name="Hong S.G."/>
            <person name="Hwang E.M."/>
            <person name="Park J.Y."/>
        </authorList>
    </citation>
    <scope>SUBCELLULAR LOCATION (ISOFORM 2)</scope>
</reference>
<reference key="10">
    <citation type="journal article" date="2014" name="J. Proteomics">
        <title>An enzyme assisted RP-RPLC approach for in-depth analysis of human liver phosphoproteome.</title>
        <authorList>
            <person name="Bian Y."/>
            <person name="Song C."/>
            <person name="Cheng K."/>
            <person name="Dong M."/>
            <person name="Wang F."/>
            <person name="Huang J."/>
            <person name="Sun D."/>
            <person name="Wang L."/>
            <person name="Ye M."/>
            <person name="Zou H."/>
        </authorList>
    </citation>
    <scope>IDENTIFICATION BY MASS SPECTROMETRY [LARGE SCALE ANALYSIS]</scope>
    <source>
        <tissue>Liver</tissue>
    </source>
</reference>
<reference key="11">
    <citation type="journal article" date="2015" name="Proteomics">
        <title>N-terminome analysis of the human mitochondrial proteome.</title>
        <authorList>
            <person name="Vaca Jacome A.S."/>
            <person name="Rabilloud T."/>
            <person name="Schaeffer-Reiss C."/>
            <person name="Rompais M."/>
            <person name="Ayoub D."/>
            <person name="Lane L."/>
            <person name="Bairoch A."/>
            <person name="Van Dorsselaer A."/>
            <person name="Carapito C."/>
        </authorList>
    </citation>
    <scope>IDENTIFICATION BY MASS SPECTROMETRY [LARGE SCALE ANALYSIS]</scope>
</reference>
<reference key="12">
    <citation type="journal article" date="2023" name="Nat. Metab.">
        <title>A defect in mitochondrial fatty acid synthesis impairs iron metabolism and causes elevated ceramide levels.</title>
        <authorList>
            <consortium name="Undiagnosed Diseases Network"/>
            <person name="Dutta D."/>
            <person name="Kanca O."/>
            <person name="Byeon S.K."/>
            <person name="Marcogliese P.C."/>
            <person name="Zuo Z."/>
            <person name="Shridharan R.V."/>
            <person name="Park J.H."/>
            <person name="Lin G."/>
            <person name="Ge M."/>
            <person name="Heimer G."/>
            <person name="Kohler J.N."/>
            <person name="Wheeler M.T."/>
            <person name="Kaipparettu B.A."/>
            <person name="Pandey A."/>
            <person name="Bellen H.J."/>
        </authorList>
    </citation>
    <scope>FUNCTION</scope>
    <scope>SUBCELLULAR LOCATION</scope>
    <scope>CHARACTERIZATION OF GLY-232; ARG-258 AND 285-TYR--MET-373</scope>
</reference>
<reference key="13">
    <citation type="submission" date="2005-06" db="PDB data bank">
        <title>The structure of human mitochondrial 2-enoyl thioester reductase (CGI-63).</title>
        <authorList>
            <consortium name="Structural genomics consortium (SGC)"/>
        </authorList>
    </citation>
    <scope>X-RAY CRYSTALLOGRAPHY (1.75 ANGSTROMS) OF 40-373</scope>
</reference>
<reference key="14">
    <citation type="journal article" date="2008" name="J. Mol. Biol.">
        <title>Structural enzymological studies of 2-enoyl thioester reductase of the human mitochondrial FAS II pathway: new insights into its substrate recognition properties.</title>
        <authorList>
            <person name="Chen Z.J."/>
            <person name="Pudas R."/>
            <person name="Sharma S."/>
            <person name="Smart O.S."/>
            <person name="Juffer A.H."/>
            <person name="Hiltunen J.K."/>
            <person name="Wierenga R.K."/>
            <person name="Haapalainen A.M."/>
        </authorList>
    </citation>
    <scope>X-RAY CRYSTALLOGRAPHY (2.41 ANGSTROMS) OF 31-373</scope>
    <scope>FUNCTION</scope>
    <scope>CATALYTIC ACTIVITY</scope>
    <scope>SUBUNIT</scope>
    <scope>BIOPHYSICOCHEMICAL PROPERTIES</scope>
    <scope>MUTAGENESIS OF SER-85; TYR-94; ILE-129; GLY-165; THR-170; TRP-311 AND PHE-324</scope>
</reference>
<reference key="15">
    <citation type="journal article" date="2016" name="Am. J. Hum. Genet.">
        <title>MECR mutations cause childhood-onset dystonia and optic atrophy, a mitochondrial fatty acid synthesis disorder.</title>
        <authorList>
            <consortium name="University of Washington Center for Mendelian Genomics"/>
            <person name="Heimer G."/>
            <person name="Keraetaer J.M."/>
            <person name="Riley L.G."/>
            <person name="Balasubramaniam S."/>
            <person name="Eyal E."/>
            <person name="Pietikaeinen L.P."/>
            <person name="Hiltunen J.K."/>
            <person name="Marek-Yagel D."/>
            <person name="Hamada J."/>
            <person name="Gregory A."/>
            <person name="Rogers C."/>
            <person name="Hogarth P."/>
            <person name="Nance M.A."/>
            <person name="Shalva N."/>
            <person name="Veber A."/>
            <person name="Tzadok M."/>
            <person name="Nissenkorn A."/>
            <person name="Tonduti D."/>
            <person name="Renaldo F."/>
            <person name="Kraoua I."/>
            <person name="Panteghini C."/>
            <person name="Valletta L."/>
            <person name="Garavaglia B."/>
            <person name="Cowley M.J."/>
            <person name="Gayevskiy V."/>
            <person name="Roscioli T."/>
            <person name="Silberstein J.M."/>
            <person name="Hoffmann C."/>
            <person name="Raas-Rothschild A."/>
            <person name="Tiranti V."/>
            <person name="Anikster Y."/>
            <person name="Christodoulou J."/>
            <person name="Kastaniotis A.J."/>
            <person name="Ben-Zeev B."/>
            <person name="Hayflick S.J."/>
        </authorList>
    </citation>
    <scope>INVOLVEMENT IN DYTOABG</scope>
    <scope>VARIANTS DYTOABG GLU-232; TRP-258; 285-TYR--MET-373 DEL AND CYS-285</scope>
    <scope>CHARACTERIZATION OF VARIANTS DYTOABG GLU-232 AND 285-TYR--MET-373 DEL</scope>
    <scope>FUNCTION</scope>
</reference>
<reference key="16">
    <citation type="journal article" date="2023" name="J. Med. Genet.">
        <title>Recessive MECR pathogenic variants cause an LHON-like optic neuropathy.</title>
        <authorList>
            <person name="Fiorini C."/>
            <person name="Degiorgi A."/>
            <person name="Cascavilla M.L."/>
            <person name="Tropeano C.V."/>
            <person name="La Morgia C."/>
            <person name="Battista M."/>
            <person name="Ormanbekova D."/>
            <person name="Palombo F."/>
            <person name="Carbonelli M."/>
            <person name="Bandello F."/>
            <person name="Carelli V."/>
            <person name="Maresca A."/>
            <person name="Barboni P."/>
            <person name="Baruffini E."/>
            <person name="Caporali L."/>
        </authorList>
    </citation>
    <scope>VARIANT OPA16 TRP-258</scope>
    <scope>CHARACTERIZATION OF VARIANT OPA16 TRP-258</scope>
    <scope>INVOLVEMENT IN OPA16</scope>
</reference>
<sequence>MWVCSTLWRVRTPARQWRGLLPASGCHGPAASSYSASAEPARVRALVYGHHGDPAKVVELKNLELAAVRGSDVRVKMLAAPINPSDINMIQGNYGFLPELPAVGGNEGVAQVVAVGSNVTGLKPGDWVIPANAGLGTWRTEAVFSEEALIQVPSDIPLQSAATLGVNPCTAYRMLMDFEQLQPGDSVIQNASNSGVGQAVIQIAAALGLRTINVVRDRPDIQKLSDRLKSLGAEHVITEEELRRPEMKNFFKDMPQPRLALNCVGGKSSTELLRQLARGGTMVTYGGMAKQPVVASVSLLIFKDLKLRGFWLSQWKKDHSPDQFKELILTLCDLIRRGQLTAPACSQVPLQDYQSALEASMKPFISSKQILTM</sequence>